<dbReference type="EC" id="4.3.2.10" evidence="1"/>
<dbReference type="EMBL" id="AM114193">
    <property type="protein sequence ID" value="CAJ37185.1"/>
    <property type="molecule type" value="Genomic_DNA"/>
</dbReference>
<dbReference type="RefSeq" id="WP_012035389.1">
    <property type="nucleotide sequence ID" value="NC_009464.1"/>
</dbReference>
<dbReference type="SMR" id="Q0W358"/>
<dbReference type="STRING" id="351160.RCIX2038"/>
<dbReference type="GeneID" id="5145451"/>
<dbReference type="KEGG" id="rci:RCIX2038"/>
<dbReference type="PATRIC" id="fig|351160.9.peg.1095"/>
<dbReference type="eggNOG" id="arCOG00617">
    <property type="taxonomic scope" value="Archaea"/>
</dbReference>
<dbReference type="OrthoDB" id="6261at2157"/>
<dbReference type="UniPathway" id="UPA00031">
    <property type="reaction ID" value="UER00010"/>
</dbReference>
<dbReference type="Proteomes" id="UP000000663">
    <property type="component" value="Chromosome"/>
</dbReference>
<dbReference type="GO" id="GO:0005737">
    <property type="term" value="C:cytoplasm"/>
    <property type="evidence" value="ECO:0007669"/>
    <property type="project" value="UniProtKB-SubCell"/>
</dbReference>
<dbReference type="GO" id="GO:0000107">
    <property type="term" value="F:imidazoleglycerol-phosphate synthase activity"/>
    <property type="evidence" value="ECO:0007669"/>
    <property type="project" value="UniProtKB-UniRule"/>
</dbReference>
<dbReference type="GO" id="GO:0016829">
    <property type="term" value="F:lyase activity"/>
    <property type="evidence" value="ECO:0007669"/>
    <property type="project" value="UniProtKB-KW"/>
</dbReference>
<dbReference type="GO" id="GO:0000105">
    <property type="term" value="P:L-histidine biosynthetic process"/>
    <property type="evidence" value="ECO:0007669"/>
    <property type="project" value="UniProtKB-UniRule"/>
</dbReference>
<dbReference type="CDD" id="cd04731">
    <property type="entry name" value="HisF"/>
    <property type="match status" value="1"/>
</dbReference>
<dbReference type="FunFam" id="3.20.20.70:FF:000006">
    <property type="entry name" value="Imidazole glycerol phosphate synthase subunit HisF"/>
    <property type="match status" value="1"/>
</dbReference>
<dbReference type="Gene3D" id="3.20.20.70">
    <property type="entry name" value="Aldolase class I"/>
    <property type="match status" value="1"/>
</dbReference>
<dbReference type="HAMAP" id="MF_01013">
    <property type="entry name" value="HisF"/>
    <property type="match status" value="1"/>
</dbReference>
<dbReference type="InterPro" id="IPR013785">
    <property type="entry name" value="Aldolase_TIM"/>
</dbReference>
<dbReference type="InterPro" id="IPR006062">
    <property type="entry name" value="His_biosynth"/>
</dbReference>
<dbReference type="InterPro" id="IPR004651">
    <property type="entry name" value="HisF"/>
</dbReference>
<dbReference type="InterPro" id="IPR050064">
    <property type="entry name" value="IGPS_HisA/HisF"/>
</dbReference>
<dbReference type="InterPro" id="IPR011060">
    <property type="entry name" value="RibuloseP-bd_barrel"/>
</dbReference>
<dbReference type="NCBIfam" id="TIGR00735">
    <property type="entry name" value="hisF"/>
    <property type="match status" value="1"/>
</dbReference>
<dbReference type="PANTHER" id="PTHR21235:SF2">
    <property type="entry name" value="IMIDAZOLE GLYCEROL PHOSPHATE SYNTHASE HISHF"/>
    <property type="match status" value="1"/>
</dbReference>
<dbReference type="PANTHER" id="PTHR21235">
    <property type="entry name" value="IMIDAZOLE GLYCEROL PHOSPHATE SYNTHASE SUBUNIT HISF/H IGP SYNTHASE SUBUNIT HISF/H"/>
    <property type="match status" value="1"/>
</dbReference>
<dbReference type="Pfam" id="PF00977">
    <property type="entry name" value="His_biosynth"/>
    <property type="match status" value="1"/>
</dbReference>
<dbReference type="SUPFAM" id="SSF51366">
    <property type="entry name" value="Ribulose-phoshate binding barrel"/>
    <property type="match status" value="1"/>
</dbReference>
<comment type="function">
    <text evidence="1">IGPS catalyzes the conversion of PRFAR and glutamine to IGP, AICAR and glutamate. The HisF subunit catalyzes the cyclization activity that produces IGP and AICAR from PRFAR using the ammonia provided by the HisH subunit.</text>
</comment>
<comment type="catalytic activity">
    <reaction evidence="1">
        <text>5-[(5-phospho-1-deoxy-D-ribulos-1-ylimino)methylamino]-1-(5-phospho-beta-D-ribosyl)imidazole-4-carboxamide + L-glutamine = D-erythro-1-(imidazol-4-yl)glycerol 3-phosphate + 5-amino-1-(5-phospho-beta-D-ribosyl)imidazole-4-carboxamide + L-glutamate + H(+)</text>
        <dbReference type="Rhea" id="RHEA:24793"/>
        <dbReference type="ChEBI" id="CHEBI:15378"/>
        <dbReference type="ChEBI" id="CHEBI:29985"/>
        <dbReference type="ChEBI" id="CHEBI:58278"/>
        <dbReference type="ChEBI" id="CHEBI:58359"/>
        <dbReference type="ChEBI" id="CHEBI:58475"/>
        <dbReference type="ChEBI" id="CHEBI:58525"/>
        <dbReference type="EC" id="4.3.2.10"/>
    </reaction>
</comment>
<comment type="pathway">
    <text evidence="1">Amino-acid biosynthesis; L-histidine biosynthesis; L-histidine from 5-phospho-alpha-D-ribose 1-diphosphate: step 5/9.</text>
</comment>
<comment type="subunit">
    <text evidence="1">Heterodimer of HisH and HisF.</text>
</comment>
<comment type="subcellular location">
    <subcellularLocation>
        <location evidence="1">Cytoplasm</location>
    </subcellularLocation>
</comment>
<comment type="similarity">
    <text evidence="1">Belongs to the HisA/HisF family.</text>
</comment>
<evidence type="ECO:0000255" key="1">
    <source>
        <dbReference type="HAMAP-Rule" id="MF_01013"/>
    </source>
</evidence>
<name>HIS6_METAR</name>
<reference key="1">
    <citation type="journal article" date="2006" name="Science">
        <title>Genome of rice cluster I archaea -- the key methane producers in the rice rhizosphere.</title>
        <authorList>
            <person name="Erkel C."/>
            <person name="Kube M."/>
            <person name="Reinhardt R."/>
            <person name="Liesack W."/>
        </authorList>
    </citation>
    <scope>NUCLEOTIDE SEQUENCE [LARGE SCALE GENOMIC DNA]</scope>
    <source>
        <strain>DSM 22066 / NBRC 105507 / MRE50</strain>
    </source>
</reference>
<sequence length="273" mass="29555">MLTRRIIPCLDVTLGPNGGCVVKGVEFVNLRSAGDPVELAKRYNDQGADELVFLDITASHEGRATMIDVIERTASEVFIPMTVGGGIKTIEEIRALLRAGADKITINTTAVKDPEFIRKASDIFGSQCIVTAIDCRSNTNIDDPNARNIVRRRDGTPAWYEVVIYGGRKATGIDAIEWAKTIEELGSGEIMLTSMDADGTKDGYDLYITKAIGEAVRIPVIASGGAGTIEHMYDAFKIANADAALAASIFHFGEYTIGQAKDYLRQRGIPVRP</sequence>
<accession>Q0W358</accession>
<feature type="chain" id="PRO_1000063169" description="Imidazole glycerol phosphate synthase subunit HisF">
    <location>
        <begin position="1"/>
        <end position="273"/>
    </location>
</feature>
<feature type="active site" evidence="1">
    <location>
        <position position="11"/>
    </location>
</feature>
<feature type="active site" evidence="1">
    <location>
        <position position="134"/>
    </location>
</feature>
<protein>
    <recommendedName>
        <fullName evidence="1">Imidazole glycerol phosphate synthase subunit HisF</fullName>
        <ecNumber evidence="1">4.3.2.10</ecNumber>
    </recommendedName>
    <alternativeName>
        <fullName evidence="1">IGP synthase cyclase subunit</fullName>
    </alternativeName>
    <alternativeName>
        <fullName evidence="1">IGP synthase subunit HisF</fullName>
    </alternativeName>
    <alternativeName>
        <fullName evidence="1">ImGP synthase subunit HisF</fullName>
        <shortName evidence="1">IGPS subunit HisF</shortName>
    </alternativeName>
</protein>
<organism>
    <name type="scientific">Methanocella arvoryzae (strain DSM 22066 / NBRC 105507 / MRE50)</name>
    <dbReference type="NCBI Taxonomy" id="351160"/>
    <lineage>
        <taxon>Archaea</taxon>
        <taxon>Methanobacteriati</taxon>
        <taxon>Methanobacteriota</taxon>
        <taxon>Stenosarchaea group</taxon>
        <taxon>Methanomicrobia</taxon>
        <taxon>Methanocellales</taxon>
        <taxon>Methanocellaceae</taxon>
        <taxon>Methanocella</taxon>
    </lineage>
</organism>
<keyword id="KW-0028">Amino-acid biosynthesis</keyword>
<keyword id="KW-0963">Cytoplasm</keyword>
<keyword id="KW-0368">Histidine biosynthesis</keyword>
<keyword id="KW-0456">Lyase</keyword>
<keyword id="KW-1185">Reference proteome</keyword>
<proteinExistence type="inferred from homology"/>
<gene>
    <name evidence="1" type="primary">hisF</name>
    <name type="ordered locus">UNCMA_10610</name>
    <name type="ORF">RCIX2038</name>
</gene>